<evidence type="ECO:0000250" key="1">
    <source>
        <dbReference type="UniProtKB" id="P15367"/>
    </source>
</evidence>
<evidence type="ECO:0000250" key="2">
    <source>
        <dbReference type="UniProtKB" id="P67812"/>
    </source>
</evidence>
<evidence type="ECO:0000255" key="3"/>
<evidence type="ECO:0000305" key="4"/>
<dbReference type="EC" id="3.4.21.89" evidence="1"/>
<dbReference type="EMBL" id="AM920433">
    <property type="protein sequence ID" value="CAP94341.1"/>
    <property type="molecule type" value="Genomic_DNA"/>
</dbReference>
<dbReference type="RefSeq" id="XP_002561963.1">
    <property type="nucleotide sequence ID" value="XM_002561917.1"/>
</dbReference>
<dbReference type="SMR" id="B6HC89"/>
<dbReference type="STRING" id="500485.B6HC89"/>
<dbReference type="MEROPS" id="S26.010"/>
<dbReference type="VEuPathDB" id="FungiDB:PCH_Pc18g01170"/>
<dbReference type="eggNOG" id="KOG3342">
    <property type="taxonomic scope" value="Eukaryota"/>
</dbReference>
<dbReference type="HOGENOM" id="CLU_089996_0_0_1"/>
<dbReference type="OMA" id="ILMNEYP"/>
<dbReference type="OrthoDB" id="10257561at2759"/>
<dbReference type="BioCyc" id="PCHR:PC18G01170-MONOMER"/>
<dbReference type="Proteomes" id="UP000000724">
    <property type="component" value="Contig Pc00c18"/>
</dbReference>
<dbReference type="GO" id="GO:0005787">
    <property type="term" value="C:signal peptidase complex"/>
    <property type="evidence" value="ECO:0007669"/>
    <property type="project" value="TreeGrafter"/>
</dbReference>
<dbReference type="GO" id="GO:0004252">
    <property type="term" value="F:serine-type endopeptidase activity"/>
    <property type="evidence" value="ECO:0007669"/>
    <property type="project" value="UniProtKB-EC"/>
</dbReference>
<dbReference type="GO" id="GO:0006465">
    <property type="term" value="P:signal peptide processing"/>
    <property type="evidence" value="ECO:0007669"/>
    <property type="project" value="InterPro"/>
</dbReference>
<dbReference type="CDD" id="cd06530">
    <property type="entry name" value="S26_SPase_I"/>
    <property type="match status" value="1"/>
</dbReference>
<dbReference type="InterPro" id="IPR036286">
    <property type="entry name" value="LexA/Signal_pep-like_sf"/>
</dbReference>
<dbReference type="InterPro" id="IPR019756">
    <property type="entry name" value="Pept_S26A_signal_pept_1_Ser-AS"/>
</dbReference>
<dbReference type="InterPro" id="IPR019533">
    <property type="entry name" value="Peptidase_S26"/>
</dbReference>
<dbReference type="InterPro" id="IPR001733">
    <property type="entry name" value="Peptidase_S26B"/>
</dbReference>
<dbReference type="NCBIfam" id="TIGR02228">
    <property type="entry name" value="sigpep_I_arch"/>
    <property type="match status" value="1"/>
</dbReference>
<dbReference type="PANTHER" id="PTHR10806">
    <property type="entry name" value="SIGNAL PEPTIDASE COMPLEX CATALYTIC SUBUNIT SEC11"/>
    <property type="match status" value="1"/>
</dbReference>
<dbReference type="PANTHER" id="PTHR10806:SF6">
    <property type="entry name" value="SIGNAL PEPTIDASE COMPLEX CATALYTIC SUBUNIT SEC11"/>
    <property type="match status" value="1"/>
</dbReference>
<dbReference type="PRINTS" id="PR00728">
    <property type="entry name" value="SIGNALPTASE"/>
</dbReference>
<dbReference type="SUPFAM" id="SSF51306">
    <property type="entry name" value="LexA/Signal peptidase"/>
    <property type="match status" value="1"/>
</dbReference>
<dbReference type="PROSITE" id="PS00501">
    <property type="entry name" value="SPASE_I_1"/>
    <property type="match status" value="1"/>
</dbReference>
<organism>
    <name type="scientific">Penicillium rubens (strain ATCC 28089 / DSM 1075 / NRRL 1951 / Wisconsin 54-1255)</name>
    <name type="common">Penicillium chrysogenum</name>
    <dbReference type="NCBI Taxonomy" id="500485"/>
    <lineage>
        <taxon>Eukaryota</taxon>
        <taxon>Fungi</taxon>
        <taxon>Dikarya</taxon>
        <taxon>Ascomycota</taxon>
        <taxon>Pezizomycotina</taxon>
        <taxon>Eurotiomycetes</taxon>
        <taxon>Eurotiomycetidae</taxon>
        <taxon>Eurotiales</taxon>
        <taxon>Aspergillaceae</taxon>
        <taxon>Penicillium</taxon>
        <taxon>Penicillium chrysogenum species complex</taxon>
    </lineage>
</organism>
<keyword id="KW-0256">Endoplasmic reticulum</keyword>
<keyword id="KW-0378">Hydrolase</keyword>
<keyword id="KW-0472">Membrane</keyword>
<keyword id="KW-0645">Protease</keyword>
<keyword id="KW-1185">Reference proteome</keyword>
<keyword id="KW-0735">Signal-anchor</keyword>
<keyword id="KW-0812">Transmembrane</keyword>
<keyword id="KW-1133">Transmembrane helix</keyword>
<sequence>MLSSLSSSITNARQSIAQVLNFALVLSTAFMMWKGLSVVSASSSPIVVVLSGSMEPAFQRGDLLFLWNRDTRTEIGEVLVYNVRGKSIPIVHRVVRTFPEVEGRASAKKGDNNLADDTELYAQDQDYLDRAEDIVGSVRGYIPMVGYVTIMLSEHPWLKTVMLGLMGLMVMIQRE</sequence>
<protein>
    <recommendedName>
        <fullName>Signal peptidase complex catalytic subunit sec11</fullName>
        <ecNumber evidence="1">3.4.21.89</ecNumber>
    </recommendedName>
    <alternativeName>
        <fullName>Signal peptidase I</fullName>
    </alternativeName>
</protein>
<name>SEC11_PENRW</name>
<feature type="chain" id="PRO_5000409429" description="Signal peptidase complex catalytic subunit sec11">
    <location>
        <begin position="1"/>
        <end position="175"/>
    </location>
</feature>
<feature type="topological domain" description="Cytoplasmic" evidence="3">
    <location>
        <begin position="1"/>
        <end position="14"/>
    </location>
</feature>
<feature type="transmembrane region" description="Helical; Signal-anchor for type II membrane protein" evidence="3">
    <location>
        <begin position="15"/>
        <end position="31"/>
    </location>
</feature>
<feature type="topological domain" description="Lumenal" evidence="3">
    <location>
        <begin position="32"/>
        <end position="175"/>
    </location>
</feature>
<feature type="region of interest" description="C-terminal short (CTS) helix" evidence="2">
    <location>
        <begin position="161"/>
        <end position="172"/>
    </location>
</feature>
<feature type="active site" description="Charge relay system" evidence="1">
    <location>
        <position position="53"/>
    </location>
</feature>
<feature type="active site" description="Charge relay system" evidence="1">
    <location>
        <position position="92"/>
    </location>
</feature>
<feature type="active site" description="Charge relay system" evidence="1">
    <location>
        <position position="117"/>
    </location>
</feature>
<comment type="function">
    <text evidence="1 2">Catalytic component of the signal peptidase complex (SPC) which catalyzes the cleavage of N-terminal signal sequences from nascent proteins as they are translocated into the lumen of the endoplasmic reticulum (By similarity). Specifically cleaves N-terminal signal peptides that contain a hydrophobic alpha-helix (h-region) shorter than 18-20 amino acids (By similarity).</text>
</comment>
<comment type="catalytic activity">
    <reaction evidence="1">
        <text>Cleavage of hydrophobic, N-terminal signal or leader sequences from secreted and periplasmic proteins.</text>
        <dbReference type="EC" id="3.4.21.89"/>
    </reaction>
</comment>
<comment type="subunit">
    <text evidence="1 2">Component of the signal peptidase complex (SPC) composed of a catalytic subunit SEC11 and three accessory subunits SPC1, SPC2 and SPC3 (By similarity). The complex induces a local thinning of the ER membrane which is used to measure the length of the signal peptide (SP) h-region of protein substrates. This ensures the selectivity of the complex towards h-regions shorter than 18-20 amino acids (By similarity). SPC associates with the translocon complex (By similarity).</text>
</comment>
<comment type="subcellular location">
    <subcellularLocation>
        <location evidence="1">Endoplasmic reticulum membrane</location>
        <topology evidence="1">Single-pass type II membrane protein</topology>
    </subcellularLocation>
</comment>
<comment type="domain">
    <text evidence="2">The C-terminal short (CTS) helix is essential for catalytic activity. It may be accommodated as a transmembrane helix in the thinned membrane environment of the complex, similarly to the signal peptide in the complex substrates.</text>
</comment>
<comment type="similarity">
    <text evidence="4">Belongs to the peptidase S26B family.</text>
</comment>
<accession>B6HC89</accession>
<proteinExistence type="inferred from homology"/>
<reference key="1">
    <citation type="journal article" date="2008" name="Nat. Biotechnol.">
        <title>Genome sequencing and analysis of the filamentous fungus Penicillium chrysogenum.</title>
        <authorList>
            <person name="van den Berg M.A."/>
            <person name="Albang R."/>
            <person name="Albermann K."/>
            <person name="Badger J.H."/>
            <person name="Daran J.-M."/>
            <person name="Driessen A.J.M."/>
            <person name="Garcia-Estrada C."/>
            <person name="Fedorova N.D."/>
            <person name="Harris D.M."/>
            <person name="Heijne W.H.M."/>
            <person name="Joardar V.S."/>
            <person name="Kiel J.A.K.W."/>
            <person name="Kovalchuk A."/>
            <person name="Martin J.F."/>
            <person name="Nierman W.C."/>
            <person name="Nijland J.G."/>
            <person name="Pronk J.T."/>
            <person name="Roubos J.A."/>
            <person name="van der Klei I.J."/>
            <person name="van Peij N.N.M.E."/>
            <person name="Veenhuis M."/>
            <person name="von Doehren H."/>
            <person name="Wagner C."/>
            <person name="Wortman J.R."/>
            <person name="Bovenberg R.A.L."/>
        </authorList>
    </citation>
    <scope>NUCLEOTIDE SEQUENCE [LARGE SCALE GENOMIC DNA]</scope>
    <source>
        <strain>ATCC 28089 / DSM 1075 / NRRL 1951 / Wisconsin 54-1255</strain>
    </source>
</reference>
<gene>
    <name type="primary">sec11</name>
    <name type="ORF">Pc18g01170</name>
</gene>